<name>YCIZ_SHIDS</name>
<organism>
    <name type="scientific">Shigella dysenteriae serotype 1 (strain Sd197)</name>
    <dbReference type="NCBI Taxonomy" id="300267"/>
    <lineage>
        <taxon>Bacteria</taxon>
        <taxon>Pseudomonadati</taxon>
        <taxon>Pseudomonadota</taxon>
        <taxon>Gammaproteobacteria</taxon>
        <taxon>Enterobacterales</taxon>
        <taxon>Enterobacteriaceae</taxon>
        <taxon>Shigella</taxon>
    </lineage>
</organism>
<keyword id="KW-1185">Reference proteome</keyword>
<feature type="chain" id="PRO_0000312013" description="UPF0509 protein YciZ">
    <location>
        <begin position="1"/>
        <end position="57"/>
    </location>
</feature>
<dbReference type="EMBL" id="CP000034">
    <property type="protein sequence ID" value="ABB61508.1"/>
    <property type="molecule type" value="Genomic_DNA"/>
</dbReference>
<dbReference type="RefSeq" id="WP_001288368.1">
    <property type="nucleotide sequence ID" value="NC_007606.1"/>
</dbReference>
<dbReference type="RefSeq" id="YP_402999.1">
    <property type="nucleotide sequence ID" value="NC_007606.1"/>
</dbReference>
<dbReference type="SMR" id="Q32GP7"/>
<dbReference type="EnsemblBacteria" id="ABB61508">
    <property type="protein sequence ID" value="ABB61508"/>
    <property type="gene ID" value="SDY_1362"/>
</dbReference>
<dbReference type="GeneID" id="93775408"/>
<dbReference type="KEGG" id="sdy:SDY_1362"/>
<dbReference type="PATRIC" id="fig|300267.13.peg.1613"/>
<dbReference type="HOGENOM" id="CLU_180697_1_0_6"/>
<dbReference type="Proteomes" id="UP000002716">
    <property type="component" value="Chromosome"/>
</dbReference>
<dbReference type="HAMAP" id="MF_01641">
    <property type="entry name" value="UPF0509"/>
    <property type="match status" value="1"/>
</dbReference>
<dbReference type="InterPro" id="IPR020887">
    <property type="entry name" value="UPF0509"/>
</dbReference>
<dbReference type="NCBIfam" id="NF010179">
    <property type="entry name" value="PRK13658.1"/>
    <property type="match status" value="1"/>
</dbReference>
<dbReference type="Pfam" id="PF23675">
    <property type="entry name" value="YciZ"/>
    <property type="match status" value="1"/>
</dbReference>
<protein>
    <recommendedName>
        <fullName evidence="1">UPF0509 protein YciZ</fullName>
    </recommendedName>
</protein>
<sequence length="57" mass="6441">MSEFDAQRVAERIDIVLDILVAGDYHSAIHNLEILKAELLRQVAESTPDIPKAPWEI</sequence>
<proteinExistence type="inferred from homology"/>
<accession>Q32GP7</accession>
<evidence type="ECO:0000255" key="1">
    <source>
        <dbReference type="HAMAP-Rule" id="MF_01641"/>
    </source>
</evidence>
<gene>
    <name evidence="1" type="primary">yciZ</name>
    <name type="ordered locus">SDY_1362</name>
</gene>
<comment type="similarity">
    <text evidence="1">Belongs to the UPF0509 family.</text>
</comment>
<reference key="1">
    <citation type="journal article" date="2005" name="Nucleic Acids Res.">
        <title>Genome dynamics and diversity of Shigella species, the etiologic agents of bacillary dysentery.</title>
        <authorList>
            <person name="Yang F."/>
            <person name="Yang J."/>
            <person name="Zhang X."/>
            <person name="Chen L."/>
            <person name="Jiang Y."/>
            <person name="Yan Y."/>
            <person name="Tang X."/>
            <person name="Wang J."/>
            <person name="Xiong Z."/>
            <person name="Dong J."/>
            <person name="Xue Y."/>
            <person name="Zhu Y."/>
            <person name="Xu X."/>
            <person name="Sun L."/>
            <person name="Chen S."/>
            <person name="Nie H."/>
            <person name="Peng J."/>
            <person name="Xu J."/>
            <person name="Wang Y."/>
            <person name="Yuan Z."/>
            <person name="Wen Y."/>
            <person name="Yao Z."/>
            <person name="Shen Y."/>
            <person name="Qiang B."/>
            <person name="Hou Y."/>
            <person name="Yu J."/>
            <person name="Jin Q."/>
        </authorList>
    </citation>
    <scope>NUCLEOTIDE SEQUENCE [LARGE SCALE GENOMIC DNA]</scope>
    <source>
        <strain>Sd197</strain>
    </source>
</reference>